<reference key="1">
    <citation type="journal article" date="2006" name="Lancet">
        <title>Complete genome sequence of USA300, an epidemic clone of community-acquired meticillin-resistant Staphylococcus aureus.</title>
        <authorList>
            <person name="Diep B.A."/>
            <person name="Gill S.R."/>
            <person name="Chang R.F."/>
            <person name="Phan T.H."/>
            <person name="Chen J.H."/>
            <person name="Davidson M.G."/>
            <person name="Lin F."/>
            <person name="Lin J."/>
            <person name="Carleton H.A."/>
            <person name="Mongodin E.F."/>
            <person name="Sensabaugh G.F."/>
            <person name="Perdreau-Remington F."/>
        </authorList>
    </citation>
    <scope>NUCLEOTIDE SEQUENCE [LARGE SCALE GENOMIC DNA]</scope>
    <source>
        <strain>USA300</strain>
    </source>
</reference>
<organism>
    <name type="scientific">Staphylococcus aureus (strain USA300)</name>
    <dbReference type="NCBI Taxonomy" id="367830"/>
    <lineage>
        <taxon>Bacteria</taxon>
        <taxon>Bacillati</taxon>
        <taxon>Bacillota</taxon>
        <taxon>Bacilli</taxon>
        <taxon>Bacillales</taxon>
        <taxon>Staphylococcaceae</taxon>
        <taxon>Staphylococcus</taxon>
    </lineage>
</organism>
<name>EBPS_STAA3</name>
<protein>
    <recommendedName>
        <fullName>Elastin-binding protein EbpS</fullName>
    </recommendedName>
</protein>
<gene>
    <name type="primary">ebpS</name>
    <name type="ordered locus">SAUSA300_1370</name>
</gene>
<proteinExistence type="inferred from homology"/>
<sequence>MSNNFKDDFEKNRQSIDTNSHQDHTEDVEKDQSELEHQDTIENTEQQFPPRNAQRRKRRRDLATNHNKQVHNESQTSEDNVQNEAGTIDDRQVESSHSTESQEPSHQDSTPQHEEEYYNKNAFAMDKSHPEPIEDNDKHDTIKNAENNTEHSTVSDKSEAEQSQQPKPYFTTGANQSETSKNEHDNDSVKQDQDEPKEHHNGKKAAAIGAGTAGVAGAAGAMAASKAKKHSNDAQNKSNSGKANNSTEDKASQDKSKDHHNGKKGAAIGAGTAGLAGGAASKSASAASKPHASNNASQNHDEHDNHDRDKERKKGGMAKVLLPLIAAVLIIGALAIFGGMALNNHNNGTKENKIANTNKNNADESKDKDTSKDASKDKSKSTDSDKSKEDQDKATKDESDNDQNNANQANNQAQNNQNQQQANQNQQQQQQRQGGGQRHTVNGQENLYRIAIQYYGSGSPENVEKIRRANGLSGNNIRNGQQIVIP</sequence>
<comment type="function">
    <text evidence="1">Promotes binding of soluble elastin peptides and tropoelastin to S.aureus cells although it is not able to promote bacterial adherence to immobilized elastin and, therefore, is not a microbial surface component recognizing adhesive matrix molecule (MSCRAMM).</text>
</comment>
<comment type="subcellular location">
    <subcellularLocation>
        <location evidence="1">Cell membrane</location>
        <topology evidence="1">Multi-pass membrane protein</topology>
    </subcellularLocation>
</comment>
<comment type="domain">
    <text evidence="1">The elastin-binding domain is located between residues 13-33 at the surface-exposed N-terminus, whereas the C-terminus, containing the LysM peptidoglycan-binding domain, is not exposed on the surface of intact cells and presumably remains buried within the peptidoglycan. The presence of the TNSHQD sequence, corresponding to residues 18-23, is essential for EbpS activity but not sufficient, additional flanking amino acids in the amino- or carboxy-terminal are required for elastin recognition (By similarity).</text>
</comment>
<evidence type="ECO:0000250" key="1"/>
<evidence type="ECO:0000255" key="2"/>
<evidence type="ECO:0000255" key="3">
    <source>
        <dbReference type="PROSITE-ProRule" id="PRU01118"/>
    </source>
</evidence>
<evidence type="ECO:0000256" key="4">
    <source>
        <dbReference type="SAM" id="MobiDB-lite"/>
    </source>
</evidence>
<keyword id="KW-1003">Cell membrane</keyword>
<keyword id="KW-0472">Membrane</keyword>
<keyword id="KW-0812">Transmembrane</keyword>
<keyword id="KW-1133">Transmembrane helix</keyword>
<feature type="initiator methionine" description="Removed" evidence="1">
    <location>
        <position position="1"/>
    </location>
</feature>
<feature type="chain" id="PRO_0000271740" description="Elastin-binding protein EbpS">
    <location>
        <begin position="2"/>
        <end position="486"/>
    </location>
</feature>
<feature type="topological domain" description="Extracellular" evidence="2">
    <location>
        <begin position="2"/>
        <end position="204"/>
    </location>
</feature>
<feature type="transmembrane region" description="Helical" evidence="2">
    <location>
        <begin position="205"/>
        <end position="225"/>
    </location>
</feature>
<feature type="topological domain" description="Cytoplasmic" evidence="2">
    <location>
        <begin position="226"/>
        <end position="319"/>
    </location>
</feature>
<feature type="transmembrane region" description="Helical" evidence="2">
    <location>
        <begin position="320"/>
        <end position="340"/>
    </location>
</feature>
<feature type="topological domain" description="Extracellular" evidence="2">
    <location>
        <begin position="341"/>
        <end position="486"/>
    </location>
</feature>
<feature type="domain" description="LysM" evidence="3">
    <location>
        <begin position="437"/>
        <end position="485"/>
    </location>
</feature>
<feature type="region of interest" description="Disordered" evidence="4">
    <location>
        <begin position="1"/>
        <end position="314"/>
    </location>
</feature>
<feature type="region of interest" description="Elastin-binding" evidence="1">
    <location>
        <begin position="14"/>
        <end position="34"/>
    </location>
</feature>
<feature type="region of interest" description="Disordered" evidence="4">
    <location>
        <begin position="351"/>
        <end position="440"/>
    </location>
</feature>
<feature type="compositionally biased region" description="Basic and acidic residues" evidence="4">
    <location>
        <begin position="1"/>
        <end position="40"/>
    </location>
</feature>
<feature type="compositionally biased region" description="Polar residues" evidence="4">
    <location>
        <begin position="64"/>
        <end position="85"/>
    </location>
</feature>
<feature type="compositionally biased region" description="Basic and acidic residues" evidence="4">
    <location>
        <begin position="103"/>
        <end position="118"/>
    </location>
</feature>
<feature type="compositionally biased region" description="Basic and acidic residues" evidence="4">
    <location>
        <begin position="126"/>
        <end position="143"/>
    </location>
</feature>
<feature type="compositionally biased region" description="Polar residues" evidence="4">
    <location>
        <begin position="161"/>
        <end position="179"/>
    </location>
</feature>
<feature type="compositionally biased region" description="Basic and acidic residues" evidence="4">
    <location>
        <begin position="180"/>
        <end position="199"/>
    </location>
</feature>
<feature type="compositionally biased region" description="Low complexity" evidence="4">
    <location>
        <begin position="204"/>
        <end position="225"/>
    </location>
</feature>
<feature type="compositionally biased region" description="Polar residues" evidence="4">
    <location>
        <begin position="233"/>
        <end position="246"/>
    </location>
</feature>
<feature type="compositionally biased region" description="Basic and acidic residues" evidence="4">
    <location>
        <begin position="247"/>
        <end position="259"/>
    </location>
</feature>
<feature type="compositionally biased region" description="Low complexity" evidence="4">
    <location>
        <begin position="278"/>
        <end position="297"/>
    </location>
</feature>
<feature type="compositionally biased region" description="Basic and acidic residues" evidence="4">
    <location>
        <begin position="299"/>
        <end position="314"/>
    </location>
</feature>
<feature type="compositionally biased region" description="Basic and acidic residues" evidence="4">
    <location>
        <begin position="361"/>
        <end position="398"/>
    </location>
</feature>
<feature type="compositionally biased region" description="Low complexity" evidence="4">
    <location>
        <begin position="403"/>
        <end position="431"/>
    </location>
</feature>
<dbReference type="EMBL" id="CP000255">
    <property type="protein sequence ID" value="ABD21237.1"/>
    <property type="molecule type" value="Genomic_DNA"/>
</dbReference>
<dbReference type="RefSeq" id="WP_000069282.1">
    <property type="nucleotide sequence ID" value="NZ_CP027476.1"/>
</dbReference>
<dbReference type="SMR" id="Q2FGW1"/>
<dbReference type="KEGG" id="saa:SAUSA300_1370"/>
<dbReference type="HOGENOM" id="CLU_043950_0_0_9"/>
<dbReference type="OMA" id="IQYYGEG"/>
<dbReference type="PRO" id="PR:Q2FGW1"/>
<dbReference type="Proteomes" id="UP000001939">
    <property type="component" value="Chromosome"/>
</dbReference>
<dbReference type="GO" id="GO:0005886">
    <property type="term" value="C:plasma membrane"/>
    <property type="evidence" value="ECO:0007669"/>
    <property type="project" value="UniProtKB-SubCell"/>
</dbReference>
<dbReference type="CDD" id="cd00118">
    <property type="entry name" value="LysM"/>
    <property type="match status" value="1"/>
</dbReference>
<dbReference type="Gene3D" id="3.10.350.10">
    <property type="entry name" value="LysM domain"/>
    <property type="match status" value="1"/>
</dbReference>
<dbReference type="InterPro" id="IPR018392">
    <property type="entry name" value="LysM_dom"/>
</dbReference>
<dbReference type="InterPro" id="IPR036779">
    <property type="entry name" value="LysM_dom_sf"/>
</dbReference>
<dbReference type="NCBIfam" id="NF033598">
    <property type="entry name" value="elast_bind_EbpS"/>
    <property type="match status" value="1"/>
</dbReference>
<dbReference type="Pfam" id="PF01476">
    <property type="entry name" value="LysM"/>
    <property type="match status" value="1"/>
</dbReference>
<dbReference type="SMART" id="SM00257">
    <property type="entry name" value="LysM"/>
    <property type="match status" value="1"/>
</dbReference>
<dbReference type="SUPFAM" id="SSF54106">
    <property type="entry name" value="LysM domain"/>
    <property type="match status" value="1"/>
</dbReference>
<dbReference type="PROSITE" id="PS51782">
    <property type="entry name" value="LYSM"/>
    <property type="match status" value="1"/>
</dbReference>
<accession>Q2FGW1</accession>